<name>GMSS_CARHZ</name>
<gene>
    <name evidence="1" type="primary">glmS</name>
    <name type="synonym">mamA</name>
    <name type="ordered locus">CHY_0307</name>
</gene>
<evidence type="ECO:0000255" key="1">
    <source>
        <dbReference type="HAMAP-Rule" id="MF_00526"/>
    </source>
</evidence>
<dbReference type="EC" id="5.4.99.1" evidence="1"/>
<dbReference type="EMBL" id="CP000141">
    <property type="protein sequence ID" value="ABB15477.1"/>
    <property type="molecule type" value="Genomic_DNA"/>
</dbReference>
<dbReference type="RefSeq" id="WP_011343253.1">
    <property type="nucleotide sequence ID" value="NC_007503.1"/>
</dbReference>
<dbReference type="SMR" id="Q3AFA7"/>
<dbReference type="STRING" id="246194.CHY_0307"/>
<dbReference type="KEGG" id="chy:CHY_0307"/>
<dbReference type="eggNOG" id="COG2185">
    <property type="taxonomic scope" value="Bacteria"/>
</dbReference>
<dbReference type="HOGENOM" id="CLU_136705_0_0_9"/>
<dbReference type="InParanoid" id="Q3AFA7"/>
<dbReference type="OrthoDB" id="9791348at2"/>
<dbReference type="UniPathway" id="UPA00561">
    <property type="reaction ID" value="UER00617"/>
</dbReference>
<dbReference type="Proteomes" id="UP000002706">
    <property type="component" value="Chromosome"/>
</dbReference>
<dbReference type="GO" id="GO:0031419">
    <property type="term" value="F:cobalamin binding"/>
    <property type="evidence" value="ECO:0007669"/>
    <property type="project" value="UniProtKB-KW"/>
</dbReference>
<dbReference type="GO" id="GO:0046872">
    <property type="term" value="F:metal ion binding"/>
    <property type="evidence" value="ECO:0007669"/>
    <property type="project" value="UniProtKB-KW"/>
</dbReference>
<dbReference type="GO" id="GO:0050097">
    <property type="term" value="F:methylaspartate mutase activity"/>
    <property type="evidence" value="ECO:0007669"/>
    <property type="project" value="UniProtKB-UniRule"/>
</dbReference>
<dbReference type="GO" id="GO:0019670">
    <property type="term" value="P:anaerobic glutamate catabolic process"/>
    <property type="evidence" value="ECO:0007669"/>
    <property type="project" value="InterPro"/>
</dbReference>
<dbReference type="GO" id="GO:0019553">
    <property type="term" value="P:glutamate catabolic process via L-citramalate"/>
    <property type="evidence" value="ECO:0007669"/>
    <property type="project" value="UniProtKB-UniRule"/>
</dbReference>
<dbReference type="CDD" id="cd02072">
    <property type="entry name" value="Glm_B12_BD"/>
    <property type="match status" value="1"/>
</dbReference>
<dbReference type="Gene3D" id="3.40.50.280">
    <property type="entry name" value="Cobalamin-binding domain"/>
    <property type="match status" value="1"/>
</dbReference>
<dbReference type="HAMAP" id="MF_00526">
    <property type="entry name" value="Me_Asp_mutase_S"/>
    <property type="match status" value="1"/>
</dbReference>
<dbReference type="InterPro" id="IPR006159">
    <property type="entry name" value="Acid_CoA_mut_C"/>
</dbReference>
<dbReference type="InterPro" id="IPR006158">
    <property type="entry name" value="Cobalamin-bd"/>
</dbReference>
<dbReference type="InterPro" id="IPR036724">
    <property type="entry name" value="Cobalamin-bd_sf"/>
</dbReference>
<dbReference type="InterPro" id="IPR006394">
    <property type="entry name" value="GlmS"/>
</dbReference>
<dbReference type="NCBIfam" id="TIGR00640">
    <property type="entry name" value="acid_CoA_mut_C"/>
    <property type="match status" value="1"/>
</dbReference>
<dbReference type="NCBIfam" id="TIGR01501">
    <property type="entry name" value="MthylAspMutase"/>
    <property type="match status" value="1"/>
</dbReference>
<dbReference type="NCBIfam" id="NF002612">
    <property type="entry name" value="PRK02261.1"/>
    <property type="match status" value="1"/>
</dbReference>
<dbReference type="Pfam" id="PF02310">
    <property type="entry name" value="B12-binding"/>
    <property type="match status" value="1"/>
</dbReference>
<dbReference type="SUPFAM" id="SSF52242">
    <property type="entry name" value="Cobalamin (vitamin B12)-binding domain"/>
    <property type="match status" value="1"/>
</dbReference>
<dbReference type="PROSITE" id="PS51332">
    <property type="entry name" value="B12_BINDING"/>
    <property type="match status" value="1"/>
</dbReference>
<reference key="1">
    <citation type="journal article" date="2005" name="PLoS Genet.">
        <title>Life in hot carbon monoxide: the complete genome sequence of Carboxydothermus hydrogenoformans Z-2901.</title>
        <authorList>
            <person name="Wu M."/>
            <person name="Ren Q."/>
            <person name="Durkin A.S."/>
            <person name="Daugherty S.C."/>
            <person name="Brinkac L.M."/>
            <person name="Dodson R.J."/>
            <person name="Madupu R."/>
            <person name="Sullivan S.A."/>
            <person name="Kolonay J.F."/>
            <person name="Nelson W.C."/>
            <person name="Tallon L.J."/>
            <person name="Jones K.M."/>
            <person name="Ulrich L.E."/>
            <person name="Gonzalez J.M."/>
            <person name="Zhulin I.B."/>
            <person name="Robb F.T."/>
            <person name="Eisen J.A."/>
        </authorList>
    </citation>
    <scope>NUCLEOTIDE SEQUENCE [LARGE SCALE GENOMIC DNA]</scope>
    <source>
        <strain>ATCC BAA-161 / DSM 6008 / Z-2901</strain>
    </source>
</reference>
<accession>Q3AFA7</accession>
<protein>
    <recommendedName>
        <fullName evidence="1">Glutamate mutase sigma subunit</fullName>
        <ecNumber evidence="1">5.4.99.1</ecNumber>
    </recommendedName>
    <alternativeName>
        <fullName evidence="1">Glutamate mutase S chain</fullName>
    </alternativeName>
    <alternativeName>
        <fullName evidence="1">Glutamate mutase small subunit</fullName>
    </alternativeName>
    <alternativeName>
        <fullName evidence="1">Methylaspartate mutase</fullName>
    </alternativeName>
</protein>
<comment type="function">
    <text evidence="1">Catalyzes the carbon skeleton rearrangement of L-glutamate to L-threo-3-methylaspartate ((2S,3S)-3-methylaspartate).</text>
</comment>
<comment type="catalytic activity">
    <reaction evidence="1">
        <text>(2S,3S)-3-methyl-L-aspartate = L-glutamate</text>
        <dbReference type="Rhea" id="RHEA:12857"/>
        <dbReference type="ChEBI" id="CHEBI:29985"/>
        <dbReference type="ChEBI" id="CHEBI:58724"/>
        <dbReference type="EC" id="5.4.99.1"/>
    </reaction>
</comment>
<comment type="cofactor">
    <cofactor evidence="1">
        <name>adenosylcob(III)alamin</name>
        <dbReference type="ChEBI" id="CHEBI:18408"/>
    </cofactor>
</comment>
<comment type="pathway">
    <text evidence="1">Amino-acid degradation; L-glutamate degradation via mesaconate pathway; acetate and pyruvate from L-glutamate: step 1/4.</text>
</comment>
<comment type="subunit">
    <text evidence="1">Heterotetramer composed of 2 epsilon subunits (GlmE) and 2 sigma subunits (GlmS). GlmE exists as a homodimer and GlmS as a monomer.</text>
</comment>
<comment type="similarity">
    <text evidence="1">Belongs to the methylaspartate mutase GlmS subunit family.</text>
</comment>
<proteinExistence type="inferred from homology"/>
<sequence length="137" mass="14868">MKEVNLVLGVIGADVHAIGNKILEYALTNAGFKVHNLGVMVSQEEFVKAALETDAKAVLVSSLYGHGEIDCRGLKEKFIEAGLDDVLLYVGGNLVVGKQDFSEVERKFKAMGFDRVFPPGTMPEEAIKALKEDLGLM</sequence>
<feature type="chain" id="PRO_0000264141" description="Glutamate mutase sigma subunit">
    <location>
        <begin position="1"/>
        <end position="137"/>
    </location>
</feature>
<feature type="domain" description="B12-binding" evidence="1">
    <location>
        <begin position="3"/>
        <end position="137"/>
    </location>
</feature>
<feature type="binding site" evidence="1">
    <location>
        <begin position="13"/>
        <end position="17"/>
    </location>
    <ligand>
        <name>adenosylcob(III)alamin</name>
        <dbReference type="ChEBI" id="CHEBI:18408"/>
    </ligand>
</feature>
<feature type="binding site" description="axial binding residue" evidence="1">
    <location>
        <position position="16"/>
    </location>
    <ligand>
        <name>adenosylcob(III)alamin</name>
        <dbReference type="ChEBI" id="CHEBI:18408"/>
    </ligand>
    <ligandPart>
        <name>Co</name>
        <dbReference type="ChEBI" id="CHEBI:27638"/>
    </ligandPart>
</feature>
<feature type="binding site" evidence="1">
    <location>
        <begin position="61"/>
        <end position="63"/>
    </location>
    <ligand>
        <name>adenosylcob(III)alamin</name>
        <dbReference type="ChEBI" id="CHEBI:18408"/>
    </ligand>
</feature>
<feature type="binding site" evidence="1">
    <location>
        <begin position="93"/>
        <end position="97"/>
    </location>
    <ligand>
        <name>adenosylcob(III)alamin</name>
        <dbReference type="ChEBI" id="CHEBI:18408"/>
    </ligand>
</feature>
<organism>
    <name type="scientific">Carboxydothermus hydrogenoformans (strain ATCC BAA-161 / DSM 6008 / Z-2901)</name>
    <dbReference type="NCBI Taxonomy" id="246194"/>
    <lineage>
        <taxon>Bacteria</taxon>
        <taxon>Bacillati</taxon>
        <taxon>Bacillota</taxon>
        <taxon>Clostridia</taxon>
        <taxon>Thermoanaerobacterales</taxon>
        <taxon>Thermoanaerobacteraceae</taxon>
        <taxon>Carboxydothermus</taxon>
    </lineage>
</organism>
<keyword id="KW-0846">Cobalamin</keyword>
<keyword id="KW-0170">Cobalt</keyword>
<keyword id="KW-0413">Isomerase</keyword>
<keyword id="KW-0479">Metal-binding</keyword>
<keyword id="KW-1185">Reference proteome</keyword>